<accession>A4RHN5</accession>
<accession>G4MT28</accession>
<protein>
    <recommendedName>
        <fullName evidence="1">Phosphatidylethanolamine N-methyltransferase</fullName>
        <shortName evidence="1">PE methyltransferase</shortName>
        <shortName evidence="1">PEAMT</shortName>
        <shortName evidence="1">PEMT</shortName>
        <ecNumber evidence="1">2.1.1.17</ecNumber>
    </recommendedName>
</protein>
<evidence type="ECO:0000255" key="1">
    <source>
        <dbReference type="HAMAP-Rule" id="MF_03217"/>
    </source>
</evidence>
<evidence type="ECO:0000256" key="2">
    <source>
        <dbReference type="SAM" id="MobiDB-lite"/>
    </source>
</evidence>
<evidence type="ECO:0000305" key="3"/>
<organism>
    <name type="scientific">Pyricularia oryzae (strain 70-15 / ATCC MYA-4617 / FGSC 8958)</name>
    <name type="common">Rice blast fungus</name>
    <name type="synonym">Magnaporthe oryzae</name>
    <dbReference type="NCBI Taxonomy" id="242507"/>
    <lineage>
        <taxon>Eukaryota</taxon>
        <taxon>Fungi</taxon>
        <taxon>Dikarya</taxon>
        <taxon>Ascomycota</taxon>
        <taxon>Pezizomycotina</taxon>
        <taxon>Sordariomycetes</taxon>
        <taxon>Sordariomycetidae</taxon>
        <taxon>Magnaporthales</taxon>
        <taxon>Pyriculariaceae</taxon>
        <taxon>Pyricularia</taxon>
    </lineage>
</organism>
<name>CHO2_PYRO7</name>
<dbReference type="EC" id="2.1.1.17" evidence="1"/>
<dbReference type="EMBL" id="CM001232">
    <property type="protein sequence ID" value="EHA55493.1"/>
    <property type="status" value="ALT_INIT"/>
    <property type="molecule type" value="Genomic_DNA"/>
</dbReference>
<dbReference type="RefSeq" id="XP_003715300.1">
    <property type="nucleotide sequence ID" value="XM_003715252.1"/>
</dbReference>
<dbReference type="SMR" id="A4RHN5"/>
<dbReference type="FunCoup" id="A4RHN5">
    <property type="interactions" value="63"/>
</dbReference>
<dbReference type="STRING" id="242507.A4RHN5"/>
<dbReference type="GeneID" id="2683232"/>
<dbReference type="KEGG" id="mgr:MGG_07110"/>
<dbReference type="eggNOG" id="ENOG502QRGH">
    <property type="taxonomic scope" value="Eukaryota"/>
</dbReference>
<dbReference type="InParanoid" id="A4RHN5"/>
<dbReference type="OrthoDB" id="4583at2759"/>
<dbReference type="UniPathway" id="UPA00753"/>
<dbReference type="Proteomes" id="UP000009058">
    <property type="component" value="Chromosome 2"/>
</dbReference>
<dbReference type="GO" id="GO:0005789">
    <property type="term" value="C:endoplasmic reticulum membrane"/>
    <property type="evidence" value="ECO:0007669"/>
    <property type="project" value="UniProtKB-SubCell"/>
</dbReference>
<dbReference type="GO" id="GO:0004608">
    <property type="term" value="F:phosphatidylethanolamine N-methyltransferase activity"/>
    <property type="evidence" value="ECO:0007669"/>
    <property type="project" value="UniProtKB-UniRule"/>
</dbReference>
<dbReference type="GO" id="GO:0032259">
    <property type="term" value="P:methylation"/>
    <property type="evidence" value="ECO:0007669"/>
    <property type="project" value="UniProtKB-KW"/>
</dbReference>
<dbReference type="GO" id="GO:0006656">
    <property type="term" value="P:phosphatidylcholine biosynthetic process"/>
    <property type="evidence" value="ECO:0007669"/>
    <property type="project" value="UniProtKB-UniRule"/>
</dbReference>
<dbReference type="HAMAP" id="MF_03217">
    <property type="entry name" value="PEMT"/>
    <property type="match status" value="1"/>
</dbReference>
<dbReference type="InterPro" id="IPR007318">
    <property type="entry name" value="Phopholipid_MeTrfase"/>
</dbReference>
<dbReference type="InterPro" id="IPR016219">
    <property type="entry name" value="Phosphatid-EA_MeTrfase_fun"/>
</dbReference>
<dbReference type="PANTHER" id="PTHR32138">
    <property type="entry name" value="PHOSPHATIDYLETHANOLAMINE N-METHYLTRANSFERASE"/>
    <property type="match status" value="1"/>
</dbReference>
<dbReference type="PANTHER" id="PTHR32138:SF0">
    <property type="entry name" value="PHOSPHATIDYLETHANOLAMINE N-METHYLTRANSFERASE"/>
    <property type="match status" value="1"/>
</dbReference>
<dbReference type="Pfam" id="PF04191">
    <property type="entry name" value="PEMT"/>
    <property type="match status" value="2"/>
</dbReference>
<dbReference type="PIRSF" id="PIRSF000383">
    <property type="entry name" value="PEAMT"/>
    <property type="match status" value="1"/>
</dbReference>
<dbReference type="PROSITE" id="PS51598">
    <property type="entry name" value="SAM_CHO2"/>
    <property type="match status" value="1"/>
</dbReference>
<sequence length="963" mass="108358">MSATTKGGQEPVAPTNIRKRRGVQAEGDTESSTAQDGIGHAPTAQYEQSEDQEQAKLRQANKSYGRTPDGTVFTVPTTHDMVSQLLDPRQPKNLSDVIVLAILGMHILAAYALPSHLKRPVFAAIFIFWRASYNIGIGILLRVQSQHKLLVVKAKKWGIFEDPASGKNPRPWLYHLLKRELEAKIPEDYKLEEAPIEYNTWLLFRRVVDLILMCDFVSYCLFAAVCGSTPDGEAPWATVARWVMGWVLVGLNLWIKLDAHRVVKDFAWYWGDFFYLIDQELTFDGVFELAPHPMYSIGYIGYYGISMMAASYDVLFISIIAHLAQLIFLVVVENPHIEKTYNPPPPRSAGQMQPLDGAKDADSATRDSPATVHNMLGFKNIDLFRVPDYTTILLCIYLGVLSLATPKTEFWQAAFIVHAVLCRLWFSLGLGWILTFQSKEKRFTRHFVKYGESAGEAWRQWKGLYHVSTVMCHGSFIAACWKMYTVPADWTQEWSILKHVTGTGLVALQIWTAVSIYDELGEFGWFFGDFFFNNRTKLTYRSIYRFLNNPERVMGSLGLYGAALITWSRAIFVLALISHLLTLAFISYVEKPHMQKIYGQSIREEAGLTKFVKRSLPPPVKEWSDSVDKVLDEAKAFVEDFVESARPKLAAGVSTIVRDTTALFNTYPARLTISQLNPSLAGLDPKQYSLSLEGTVAQKAASGRSTGKESIHGRFPKDVKTLVLEYGAPIRVKWTAPANHSKNDWVGLYMVIDNRSREVTEVPSQGRWVPTCPGVYDRATDGGIITADKPLPSQPDMVQGEMVFEGDRLWWTQGTFELRYHHDGSHNVMSVSEPFEIKIGRFDEDLDEEVLATGGGVYERAVESELLPLVRNCLDRDPEIAPSTVDEPFGSPVERDSKYAKRVVYAIHHMFGIEFAPAVVPADGNVRKLAWRICNAKQVLAPYSMSKSRGTTTPLGEKFLETL</sequence>
<reference key="1">
    <citation type="journal article" date="2005" name="Nature">
        <title>The genome sequence of the rice blast fungus Magnaporthe grisea.</title>
        <authorList>
            <person name="Dean R.A."/>
            <person name="Talbot N.J."/>
            <person name="Ebbole D.J."/>
            <person name="Farman M.L."/>
            <person name="Mitchell T.K."/>
            <person name="Orbach M.J."/>
            <person name="Thon M.R."/>
            <person name="Kulkarni R."/>
            <person name="Xu J.-R."/>
            <person name="Pan H."/>
            <person name="Read N.D."/>
            <person name="Lee Y.-H."/>
            <person name="Carbone I."/>
            <person name="Brown D."/>
            <person name="Oh Y.Y."/>
            <person name="Donofrio N."/>
            <person name="Jeong J.S."/>
            <person name="Soanes D.M."/>
            <person name="Djonovic S."/>
            <person name="Kolomiets E."/>
            <person name="Rehmeyer C."/>
            <person name="Li W."/>
            <person name="Harding M."/>
            <person name="Kim S."/>
            <person name="Lebrun M.-H."/>
            <person name="Bohnert H."/>
            <person name="Coughlan S."/>
            <person name="Butler J."/>
            <person name="Calvo S.E."/>
            <person name="Ma L.-J."/>
            <person name="Nicol R."/>
            <person name="Purcell S."/>
            <person name="Nusbaum C."/>
            <person name="Galagan J.E."/>
            <person name="Birren B.W."/>
        </authorList>
    </citation>
    <scope>NUCLEOTIDE SEQUENCE [LARGE SCALE GENOMIC DNA]</scope>
    <source>
        <strain>70-15 / ATCC MYA-4617 / FGSC 8958</strain>
    </source>
</reference>
<feature type="chain" id="PRO_0000405895" description="Phosphatidylethanolamine N-methyltransferase">
    <location>
        <begin position="1"/>
        <end position="963"/>
    </location>
</feature>
<feature type="topological domain" description="Lumenal" evidence="1">
    <location>
        <begin position="1"/>
        <end position="96"/>
    </location>
</feature>
<feature type="transmembrane region" description="Helical" evidence="1">
    <location>
        <begin position="97"/>
        <end position="117"/>
    </location>
</feature>
<feature type="topological domain" description="Cytoplasmic" evidence="1">
    <location>
        <begin position="118"/>
        <end position="120"/>
    </location>
</feature>
<feature type="transmembrane region" description="Helical" evidence="1">
    <location>
        <begin position="121"/>
        <end position="141"/>
    </location>
</feature>
<feature type="topological domain" description="Lumenal" evidence="1">
    <location>
        <begin position="142"/>
        <end position="206"/>
    </location>
</feature>
<feature type="transmembrane region" description="Helical" evidence="1">
    <location>
        <begin position="207"/>
        <end position="227"/>
    </location>
</feature>
<feature type="topological domain" description="Cytoplasmic" evidence="1">
    <location>
        <begin position="228"/>
        <end position="234"/>
    </location>
</feature>
<feature type="transmembrane region" description="Helical" evidence="1">
    <location>
        <begin position="235"/>
        <end position="255"/>
    </location>
</feature>
<feature type="topological domain" description="Lumenal" evidence="1">
    <location>
        <begin position="256"/>
        <end position="284"/>
    </location>
</feature>
<feature type="transmembrane region" description="Helical" evidence="1">
    <location>
        <begin position="285"/>
        <end position="305"/>
    </location>
</feature>
<feature type="topological domain" description="Cytoplasmic" evidence="1">
    <location>
        <begin position="306"/>
        <end position="311"/>
    </location>
</feature>
<feature type="transmembrane region" description="Helical" evidence="1">
    <location>
        <begin position="312"/>
        <end position="332"/>
    </location>
</feature>
<feature type="topological domain" description="Lumenal" evidence="1">
    <location>
        <begin position="333"/>
        <end position="385"/>
    </location>
</feature>
<feature type="transmembrane region" description="Helical" evidence="1">
    <location>
        <begin position="386"/>
        <end position="406"/>
    </location>
</feature>
<feature type="topological domain" description="Cytoplasmic" evidence="1">
    <location>
        <begin position="407"/>
        <end position="413"/>
    </location>
</feature>
<feature type="transmembrane region" description="Helical" evidence="1">
    <location>
        <begin position="414"/>
        <end position="434"/>
    </location>
</feature>
<feature type="topological domain" description="Lumenal" evidence="1">
    <location>
        <begin position="435"/>
        <end position="463"/>
    </location>
</feature>
<feature type="transmembrane region" description="Helical" evidence="1">
    <location>
        <begin position="464"/>
        <end position="481"/>
    </location>
</feature>
<feature type="topological domain" description="Cytoplasmic" evidence="1">
    <location>
        <begin position="482"/>
        <end position="495"/>
    </location>
</feature>
<feature type="transmembrane region" description="Helical" evidence="1">
    <location>
        <begin position="496"/>
        <end position="516"/>
    </location>
</feature>
<feature type="topological domain" description="Lumenal" evidence="1">
    <location>
        <begin position="517"/>
        <end position="569"/>
    </location>
</feature>
<feature type="transmembrane region" description="Helical" evidence="1">
    <location>
        <begin position="570"/>
        <end position="590"/>
    </location>
</feature>
<feature type="topological domain" description="Cytoplasmic" evidence="1">
    <location>
        <begin position="591"/>
        <end position="963"/>
    </location>
</feature>
<feature type="region of interest" description="Disordered" evidence="2">
    <location>
        <begin position="1"/>
        <end position="73"/>
    </location>
</feature>
<feature type="region of interest" description="Disordered" evidence="2">
    <location>
        <begin position="341"/>
        <end position="367"/>
    </location>
</feature>
<keyword id="KW-0256">Endoplasmic reticulum</keyword>
<keyword id="KW-0444">Lipid biosynthesis</keyword>
<keyword id="KW-0443">Lipid metabolism</keyword>
<keyword id="KW-0472">Membrane</keyword>
<keyword id="KW-0489">Methyltransferase</keyword>
<keyword id="KW-0594">Phospholipid biosynthesis</keyword>
<keyword id="KW-1208">Phospholipid metabolism</keyword>
<keyword id="KW-1185">Reference proteome</keyword>
<keyword id="KW-0949">S-adenosyl-L-methionine</keyword>
<keyword id="KW-0808">Transferase</keyword>
<keyword id="KW-0812">Transmembrane</keyword>
<keyword id="KW-1133">Transmembrane helix</keyword>
<gene>
    <name type="primary">CHO2</name>
    <name type="ORF">MGG_07110</name>
</gene>
<comment type="function">
    <text evidence="1">Catalyzes the first step of the methylation pathway of phosphatidylcholine biosynthesis, the SAM-dependent methylation of phosphatidylethanolamine (PE) to phosphatidylmonomethylethanolamine (PMME).</text>
</comment>
<comment type="catalytic activity">
    <reaction evidence="1">
        <text>a 1,2-diacyl-sn-glycero-3-phosphoethanolamine + S-adenosyl-L-methionine = a 1,2-diacyl-sn-glycero-3-phospho-N-methylethanolamine + S-adenosyl-L-homocysteine + H(+)</text>
        <dbReference type="Rhea" id="RHEA:11164"/>
        <dbReference type="ChEBI" id="CHEBI:15378"/>
        <dbReference type="ChEBI" id="CHEBI:57856"/>
        <dbReference type="ChEBI" id="CHEBI:59789"/>
        <dbReference type="ChEBI" id="CHEBI:64573"/>
        <dbReference type="ChEBI" id="CHEBI:64612"/>
        <dbReference type="EC" id="2.1.1.17"/>
    </reaction>
</comment>
<comment type="pathway">
    <text evidence="1">Phospholipid metabolism; phosphatidylcholine biosynthesis.</text>
</comment>
<comment type="subcellular location">
    <subcellularLocation>
        <location evidence="1">Endoplasmic reticulum membrane</location>
        <topology evidence="1">Multi-pass membrane protein</topology>
    </subcellularLocation>
</comment>
<comment type="similarity">
    <text evidence="1">Belongs to the class VI-like SAM-binding methyltransferase superfamily. CHO2 family.</text>
</comment>
<comment type="sequence caution" evidence="3">
    <conflict type="erroneous initiation">
        <sequence resource="EMBL-CDS" id="EHA55493"/>
    </conflict>
    <text>Extended N-terminus.</text>
</comment>
<proteinExistence type="inferred from homology"/>